<accession>A1TLL9</accession>
<feature type="chain" id="PRO_0000357751" description="NADH-quinone oxidoreductase subunit D">
    <location>
        <begin position="1"/>
        <end position="417"/>
    </location>
</feature>
<proteinExistence type="inferred from homology"/>
<gene>
    <name evidence="1" type="primary">nuoD</name>
    <name type="ordered locus">Aave_1266</name>
</gene>
<evidence type="ECO:0000255" key="1">
    <source>
        <dbReference type="HAMAP-Rule" id="MF_01358"/>
    </source>
</evidence>
<protein>
    <recommendedName>
        <fullName evidence="1">NADH-quinone oxidoreductase subunit D</fullName>
        <ecNumber evidence="1">7.1.1.-</ecNumber>
    </recommendedName>
    <alternativeName>
        <fullName evidence="1">NADH dehydrogenase I subunit D</fullName>
    </alternativeName>
    <alternativeName>
        <fullName evidence="1">NDH-1 subunit D</fullName>
    </alternativeName>
</protein>
<keyword id="KW-0997">Cell inner membrane</keyword>
<keyword id="KW-1003">Cell membrane</keyword>
<keyword id="KW-0472">Membrane</keyword>
<keyword id="KW-0520">NAD</keyword>
<keyword id="KW-0874">Quinone</keyword>
<keyword id="KW-1278">Translocase</keyword>
<keyword id="KW-0813">Transport</keyword>
<keyword id="KW-0830">Ubiquinone</keyword>
<reference key="1">
    <citation type="submission" date="2006-12" db="EMBL/GenBank/DDBJ databases">
        <title>Complete sequence of Acidovorax avenae subsp. citrulli AAC00-1.</title>
        <authorList>
            <person name="Copeland A."/>
            <person name="Lucas S."/>
            <person name="Lapidus A."/>
            <person name="Barry K."/>
            <person name="Detter J.C."/>
            <person name="Glavina del Rio T."/>
            <person name="Dalin E."/>
            <person name="Tice H."/>
            <person name="Pitluck S."/>
            <person name="Kiss H."/>
            <person name="Brettin T."/>
            <person name="Bruce D."/>
            <person name="Han C."/>
            <person name="Tapia R."/>
            <person name="Gilna P."/>
            <person name="Schmutz J."/>
            <person name="Larimer F."/>
            <person name="Land M."/>
            <person name="Hauser L."/>
            <person name="Kyrpides N."/>
            <person name="Kim E."/>
            <person name="Stahl D."/>
            <person name="Richardson P."/>
        </authorList>
    </citation>
    <scope>NUCLEOTIDE SEQUENCE [LARGE SCALE GENOMIC DNA]</scope>
    <source>
        <strain>AAC00-1</strain>
    </source>
</reference>
<dbReference type="EC" id="7.1.1.-" evidence="1"/>
<dbReference type="EMBL" id="CP000512">
    <property type="protein sequence ID" value="ABM31857.1"/>
    <property type="molecule type" value="Genomic_DNA"/>
</dbReference>
<dbReference type="RefSeq" id="WP_011794409.1">
    <property type="nucleotide sequence ID" value="NC_008752.1"/>
</dbReference>
<dbReference type="SMR" id="A1TLL9"/>
<dbReference type="STRING" id="397945.Aave_1266"/>
<dbReference type="GeneID" id="79790929"/>
<dbReference type="KEGG" id="aav:Aave_1266"/>
<dbReference type="eggNOG" id="COG0649">
    <property type="taxonomic scope" value="Bacteria"/>
</dbReference>
<dbReference type="HOGENOM" id="CLU_015134_1_0_4"/>
<dbReference type="OrthoDB" id="9801496at2"/>
<dbReference type="Proteomes" id="UP000002596">
    <property type="component" value="Chromosome"/>
</dbReference>
<dbReference type="GO" id="GO:0005886">
    <property type="term" value="C:plasma membrane"/>
    <property type="evidence" value="ECO:0007669"/>
    <property type="project" value="UniProtKB-SubCell"/>
</dbReference>
<dbReference type="GO" id="GO:0051287">
    <property type="term" value="F:NAD binding"/>
    <property type="evidence" value="ECO:0007669"/>
    <property type="project" value="InterPro"/>
</dbReference>
<dbReference type="GO" id="GO:0050136">
    <property type="term" value="F:NADH:ubiquinone reductase (non-electrogenic) activity"/>
    <property type="evidence" value="ECO:0007669"/>
    <property type="project" value="UniProtKB-UniRule"/>
</dbReference>
<dbReference type="GO" id="GO:0048038">
    <property type="term" value="F:quinone binding"/>
    <property type="evidence" value="ECO:0007669"/>
    <property type="project" value="UniProtKB-KW"/>
</dbReference>
<dbReference type="FunFam" id="1.10.645.10:FF:000005">
    <property type="entry name" value="NADH-quinone oxidoreductase subunit D"/>
    <property type="match status" value="1"/>
</dbReference>
<dbReference type="Gene3D" id="1.10.645.10">
    <property type="entry name" value="Cytochrome-c3 Hydrogenase, chain B"/>
    <property type="match status" value="1"/>
</dbReference>
<dbReference type="HAMAP" id="MF_01358">
    <property type="entry name" value="NDH1_NuoD"/>
    <property type="match status" value="1"/>
</dbReference>
<dbReference type="InterPro" id="IPR001135">
    <property type="entry name" value="NADH_Q_OxRdtase_suD"/>
</dbReference>
<dbReference type="InterPro" id="IPR014029">
    <property type="entry name" value="NADH_UbQ_OxRdtase_49kDa_CS"/>
</dbReference>
<dbReference type="InterPro" id="IPR022885">
    <property type="entry name" value="NDH1_su_D/H"/>
</dbReference>
<dbReference type="InterPro" id="IPR029014">
    <property type="entry name" value="NiFe-Hase_large"/>
</dbReference>
<dbReference type="NCBIfam" id="TIGR01962">
    <property type="entry name" value="NuoD"/>
    <property type="match status" value="1"/>
</dbReference>
<dbReference type="NCBIfam" id="NF004739">
    <property type="entry name" value="PRK06075.1"/>
    <property type="match status" value="1"/>
</dbReference>
<dbReference type="PANTHER" id="PTHR11993:SF10">
    <property type="entry name" value="NADH DEHYDROGENASE [UBIQUINONE] IRON-SULFUR PROTEIN 2, MITOCHONDRIAL"/>
    <property type="match status" value="1"/>
</dbReference>
<dbReference type="PANTHER" id="PTHR11993">
    <property type="entry name" value="NADH-UBIQUINONE OXIDOREDUCTASE 49 KDA SUBUNIT"/>
    <property type="match status" value="1"/>
</dbReference>
<dbReference type="Pfam" id="PF00346">
    <property type="entry name" value="Complex1_49kDa"/>
    <property type="match status" value="1"/>
</dbReference>
<dbReference type="SUPFAM" id="SSF56762">
    <property type="entry name" value="HydB/Nqo4-like"/>
    <property type="match status" value="1"/>
</dbReference>
<dbReference type="PROSITE" id="PS00535">
    <property type="entry name" value="COMPLEX1_49K"/>
    <property type="match status" value="1"/>
</dbReference>
<organism>
    <name type="scientific">Paracidovorax citrulli (strain AAC00-1)</name>
    <name type="common">Acidovorax citrulli</name>
    <dbReference type="NCBI Taxonomy" id="397945"/>
    <lineage>
        <taxon>Bacteria</taxon>
        <taxon>Pseudomonadati</taxon>
        <taxon>Pseudomonadota</taxon>
        <taxon>Betaproteobacteria</taxon>
        <taxon>Burkholderiales</taxon>
        <taxon>Comamonadaceae</taxon>
        <taxon>Paracidovorax</taxon>
    </lineage>
</organism>
<comment type="function">
    <text evidence="1">NDH-1 shuttles electrons from NADH, via FMN and iron-sulfur (Fe-S) centers, to quinones in the respiratory chain. The immediate electron acceptor for the enzyme in this species is believed to be ubiquinone. Couples the redox reaction to proton translocation (for every two electrons transferred, four hydrogen ions are translocated across the cytoplasmic membrane), and thus conserves the redox energy in a proton gradient.</text>
</comment>
<comment type="catalytic activity">
    <reaction evidence="1">
        <text>a quinone + NADH + 5 H(+)(in) = a quinol + NAD(+) + 4 H(+)(out)</text>
        <dbReference type="Rhea" id="RHEA:57888"/>
        <dbReference type="ChEBI" id="CHEBI:15378"/>
        <dbReference type="ChEBI" id="CHEBI:24646"/>
        <dbReference type="ChEBI" id="CHEBI:57540"/>
        <dbReference type="ChEBI" id="CHEBI:57945"/>
        <dbReference type="ChEBI" id="CHEBI:132124"/>
    </reaction>
</comment>
<comment type="subunit">
    <text evidence="1">NDH-1 is composed of 14 different subunits. Subunits NuoB, C, D, E, F, and G constitute the peripheral sector of the complex.</text>
</comment>
<comment type="subcellular location">
    <subcellularLocation>
        <location evidence="1">Cell inner membrane</location>
        <topology evidence="1">Peripheral membrane protein</topology>
        <orientation evidence="1">Cytoplasmic side</orientation>
    </subcellularLocation>
</comment>
<comment type="similarity">
    <text evidence="1">Belongs to the complex I 49 kDa subunit family.</text>
</comment>
<name>NUOD_PARC0</name>
<sequence>MAEIKNYSLNFGPQHPAAHGVLRLVLELDGEVVQRADPHIGLLHRATEKLAEHKTFIQSLPYMDRLDYVSMMCNEHAYCLAIEKLLGIDVPLRAQYIRVMFSEITRLLNHLMWLGSHGNDCGSSTILIYTFREREDLFDMYEAVSGARMHAAYFRPGGVYRDLPDSMPQYQASKVRNAKAIEVLNQNRQGSLLDFIDDFTQRFPKCVDEYETLLTDNRIWKQRTVDIGIVTPERALNLGMTGPMLRGSGIAWDLRKKQPYDAYDRVEFDIPVGKTGDCYDRYLVRVQEMRQSNRIIKQCVDWLKANPGPVITDNHKVAPPSRESMKSNMEELIHHFKLFTEGFRVPEGEAYAAVEHPKGEFGIYLVSDGANKPYRLKIRAPGFAHLATLDEMARGHMIADAVAIIGTMDIVFGEIDR</sequence>